<dbReference type="EMBL" id="CP000377">
    <property type="protein sequence ID" value="ABF65641.1"/>
    <property type="molecule type" value="Genomic_DNA"/>
</dbReference>
<dbReference type="RefSeq" id="WP_011540222.1">
    <property type="nucleotide sequence ID" value="NC_008044.1"/>
</dbReference>
<dbReference type="SMR" id="Q1GCH5"/>
<dbReference type="STRING" id="292414.TM1040_2909"/>
<dbReference type="KEGG" id="sit:TM1040_2909"/>
<dbReference type="eggNOG" id="COG0779">
    <property type="taxonomic scope" value="Bacteria"/>
</dbReference>
<dbReference type="HOGENOM" id="CLU_070525_0_1_5"/>
<dbReference type="OrthoDB" id="9805006at2"/>
<dbReference type="Proteomes" id="UP000000636">
    <property type="component" value="Chromosome"/>
</dbReference>
<dbReference type="GO" id="GO:0005829">
    <property type="term" value="C:cytosol"/>
    <property type="evidence" value="ECO:0007669"/>
    <property type="project" value="TreeGrafter"/>
</dbReference>
<dbReference type="GO" id="GO:0000028">
    <property type="term" value="P:ribosomal small subunit assembly"/>
    <property type="evidence" value="ECO:0007669"/>
    <property type="project" value="TreeGrafter"/>
</dbReference>
<dbReference type="GO" id="GO:0006412">
    <property type="term" value="P:translation"/>
    <property type="evidence" value="ECO:0007669"/>
    <property type="project" value="TreeGrafter"/>
</dbReference>
<dbReference type="CDD" id="cd01734">
    <property type="entry name" value="YlxS_C"/>
    <property type="match status" value="1"/>
</dbReference>
<dbReference type="FunFam" id="3.30.300.70:FF:000001">
    <property type="entry name" value="Ribosome maturation factor RimP"/>
    <property type="match status" value="1"/>
</dbReference>
<dbReference type="Gene3D" id="2.30.30.180">
    <property type="entry name" value="Ribosome maturation factor RimP, C-terminal domain"/>
    <property type="match status" value="1"/>
</dbReference>
<dbReference type="Gene3D" id="3.30.300.70">
    <property type="entry name" value="RimP-like superfamily, N-terminal"/>
    <property type="match status" value="1"/>
</dbReference>
<dbReference type="HAMAP" id="MF_01077">
    <property type="entry name" value="RimP"/>
    <property type="match status" value="1"/>
</dbReference>
<dbReference type="InterPro" id="IPR003728">
    <property type="entry name" value="Ribosome_maturation_RimP"/>
</dbReference>
<dbReference type="InterPro" id="IPR028998">
    <property type="entry name" value="RimP_C"/>
</dbReference>
<dbReference type="InterPro" id="IPR036847">
    <property type="entry name" value="RimP_C_sf"/>
</dbReference>
<dbReference type="InterPro" id="IPR028989">
    <property type="entry name" value="RimP_N"/>
</dbReference>
<dbReference type="InterPro" id="IPR035956">
    <property type="entry name" value="RimP_N_sf"/>
</dbReference>
<dbReference type="NCBIfam" id="NF000932">
    <property type="entry name" value="PRK00092.2-5"/>
    <property type="match status" value="1"/>
</dbReference>
<dbReference type="PANTHER" id="PTHR33867">
    <property type="entry name" value="RIBOSOME MATURATION FACTOR RIMP"/>
    <property type="match status" value="1"/>
</dbReference>
<dbReference type="PANTHER" id="PTHR33867:SF1">
    <property type="entry name" value="RIBOSOME MATURATION FACTOR RIMP"/>
    <property type="match status" value="1"/>
</dbReference>
<dbReference type="Pfam" id="PF17384">
    <property type="entry name" value="DUF150_C"/>
    <property type="match status" value="1"/>
</dbReference>
<dbReference type="Pfam" id="PF02576">
    <property type="entry name" value="RimP_N"/>
    <property type="match status" value="1"/>
</dbReference>
<dbReference type="SUPFAM" id="SSF74942">
    <property type="entry name" value="YhbC-like, C-terminal domain"/>
    <property type="match status" value="1"/>
</dbReference>
<dbReference type="SUPFAM" id="SSF75420">
    <property type="entry name" value="YhbC-like, N-terminal domain"/>
    <property type="match status" value="1"/>
</dbReference>
<accession>Q1GCH5</accession>
<reference key="1">
    <citation type="submission" date="2006-05" db="EMBL/GenBank/DDBJ databases">
        <title>Complete sequence of chromosome of Silicibacter sp. TM1040.</title>
        <authorList>
            <consortium name="US DOE Joint Genome Institute"/>
            <person name="Copeland A."/>
            <person name="Lucas S."/>
            <person name="Lapidus A."/>
            <person name="Barry K."/>
            <person name="Detter J.C."/>
            <person name="Glavina del Rio T."/>
            <person name="Hammon N."/>
            <person name="Israni S."/>
            <person name="Dalin E."/>
            <person name="Tice H."/>
            <person name="Pitluck S."/>
            <person name="Brettin T."/>
            <person name="Bruce D."/>
            <person name="Han C."/>
            <person name="Tapia R."/>
            <person name="Goodwin L."/>
            <person name="Thompson L.S."/>
            <person name="Gilna P."/>
            <person name="Schmutz J."/>
            <person name="Larimer F."/>
            <person name="Land M."/>
            <person name="Hauser L."/>
            <person name="Kyrpides N."/>
            <person name="Kim E."/>
            <person name="Belas R."/>
            <person name="Moran M.A."/>
            <person name="Buchan A."/>
            <person name="Gonzalez J.M."/>
            <person name="Schell M.A."/>
            <person name="Sun F."/>
            <person name="Richardson P."/>
        </authorList>
    </citation>
    <scope>NUCLEOTIDE SEQUENCE [LARGE SCALE GENOMIC DNA]</scope>
    <source>
        <strain>TM1040</strain>
    </source>
</reference>
<keyword id="KW-0963">Cytoplasm</keyword>
<keyword id="KW-1185">Reference proteome</keyword>
<keyword id="KW-0690">Ribosome biogenesis</keyword>
<gene>
    <name evidence="1" type="primary">rimP</name>
    <name type="ordered locus">TM1040_2909</name>
</gene>
<name>RIMP_RUEST</name>
<organism>
    <name type="scientific">Ruegeria sp. (strain TM1040)</name>
    <name type="common">Silicibacter sp.</name>
    <dbReference type="NCBI Taxonomy" id="292414"/>
    <lineage>
        <taxon>Bacteria</taxon>
        <taxon>Pseudomonadati</taxon>
        <taxon>Pseudomonadota</taxon>
        <taxon>Alphaproteobacteria</taxon>
        <taxon>Rhodobacterales</taxon>
        <taxon>Roseobacteraceae</taxon>
        <taxon>Ruegeria</taxon>
    </lineage>
</organism>
<feature type="chain" id="PRO_1000064775" description="Ribosome maturation factor RimP">
    <location>
        <begin position="1"/>
        <end position="203"/>
    </location>
</feature>
<feature type="region of interest" description="Disordered" evidence="2">
    <location>
        <begin position="183"/>
        <end position="203"/>
    </location>
</feature>
<sequence length="203" mass="22392">MTNDLIAKAAIDRRLAEIITPVIEDLGYELVRIRLMSGKTTTLQIMADRPDGGIEVDDCAAISNAVSATLDVEDPILDAYTLEVSSPGIDRPLTRLKDFDMFEGYEAKLETADLIDGRRRFKGELAGIEDDEVLINIEEHGETVTIGLKFDWLSDAKLVLTDDLIKEMLRQRKAAGVLNEDAFDDIETEGSAEGTTGSEEENK</sequence>
<proteinExistence type="inferred from homology"/>
<protein>
    <recommendedName>
        <fullName evidence="1">Ribosome maturation factor RimP</fullName>
    </recommendedName>
</protein>
<evidence type="ECO:0000255" key="1">
    <source>
        <dbReference type="HAMAP-Rule" id="MF_01077"/>
    </source>
</evidence>
<evidence type="ECO:0000256" key="2">
    <source>
        <dbReference type="SAM" id="MobiDB-lite"/>
    </source>
</evidence>
<comment type="function">
    <text evidence="1">Required for maturation of 30S ribosomal subunits.</text>
</comment>
<comment type="subcellular location">
    <subcellularLocation>
        <location evidence="1">Cytoplasm</location>
    </subcellularLocation>
</comment>
<comment type="similarity">
    <text evidence="1">Belongs to the RimP family.</text>
</comment>